<reference key="1">
    <citation type="journal article" date="2006" name="PLoS Genet.">
        <title>Comparative genomics of emerging human ehrlichiosis agents.</title>
        <authorList>
            <person name="Dunning Hotopp J.C."/>
            <person name="Lin M."/>
            <person name="Madupu R."/>
            <person name="Crabtree J."/>
            <person name="Angiuoli S.V."/>
            <person name="Eisen J.A."/>
            <person name="Seshadri R."/>
            <person name="Ren Q."/>
            <person name="Wu M."/>
            <person name="Utterback T.R."/>
            <person name="Smith S."/>
            <person name="Lewis M."/>
            <person name="Khouri H."/>
            <person name="Zhang C."/>
            <person name="Niu H."/>
            <person name="Lin Q."/>
            <person name="Ohashi N."/>
            <person name="Zhi N."/>
            <person name="Nelson W.C."/>
            <person name="Brinkac L.M."/>
            <person name="Dodson R.J."/>
            <person name="Rosovitz M.J."/>
            <person name="Sundaram J.P."/>
            <person name="Daugherty S.C."/>
            <person name="Davidsen T."/>
            <person name="Durkin A.S."/>
            <person name="Gwinn M.L."/>
            <person name="Haft D.H."/>
            <person name="Selengut J.D."/>
            <person name="Sullivan S.A."/>
            <person name="Zafar N."/>
            <person name="Zhou L."/>
            <person name="Benahmed F."/>
            <person name="Forberger H."/>
            <person name="Halpin R."/>
            <person name="Mulligan S."/>
            <person name="Robinson J."/>
            <person name="White O."/>
            <person name="Rikihisa Y."/>
            <person name="Tettelin H."/>
        </authorList>
    </citation>
    <scope>NUCLEOTIDE SEQUENCE [LARGE SCALE GENOMIC DNA]</scope>
    <source>
        <strain>ATCC CRL-10679 / Arkansas</strain>
    </source>
</reference>
<evidence type="ECO:0000255" key="1">
    <source>
        <dbReference type="HAMAP-Rule" id="MF_00531"/>
    </source>
</evidence>
<evidence type="ECO:0000305" key="2"/>
<comment type="function">
    <text evidence="1">Protein S19 forms a complex with S13 that binds strongly to the 16S ribosomal RNA.</text>
</comment>
<comment type="similarity">
    <text evidence="1">Belongs to the universal ribosomal protein uS19 family.</text>
</comment>
<dbReference type="EMBL" id="CP000236">
    <property type="protein sequence ID" value="ABD45231.1"/>
    <property type="molecule type" value="Genomic_DNA"/>
</dbReference>
<dbReference type="RefSeq" id="WP_011452580.1">
    <property type="nucleotide sequence ID" value="NC_007799.1"/>
</dbReference>
<dbReference type="SMR" id="Q2GH52"/>
<dbReference type="STRING" id="205920.ECH_0413"/>
<dbReference type="KEGG" id="ech:ECH_0413"/>
<dbReference type="eggNOG" id="COG0185">
    <property type="taxonomic scope" value="Bacteria"/>
</dbReference>
<dbReference type="HOGENOM" id="CLU_144911_0_1_5"/>
<dbReference type="OrthoDB" id="9797833at2"/>
<dbReference type="Proteomes" id="UP000008320">
    <property type="component" value="Chromosome"/>
</dbReference>
<dbReference type="GO" id="GO:0005737">
    <property type="term" value="C:cytoplasm"/>
    <property type="evidence" value="ECO:0007669"/>
    <property type="project" value="UniProtKB-ARBA"/>
</dbReference>
<dbReference type="GO" id="GO:0015935">
    <property type="term" value="C:small ribosomal subunit"/>
    <property type="evidence" value="ECO:0007669"/>
    <property type="project" value="InterPro"/>
</dbReference>
<dbReference type="GO" id="GO:0019843">
    <property type="term" value="F:rRNA binding"/>
    <property type="evidence" value="ECO:0007669"/>
    <property type="project" value="UniProtKB-UniRule"/>
</dbReference>
<dbReference type="GO" id="GO:0003735">
    <property type="term" value="F:structural constituent of ribosome"/>
    <property type="evidence" value="ECO:0007669"/>
    <property type="project" value="InterPro"/>
</dbReference>
<dbReference type="GO" id="GO:0000028">
    <property type="term" value="P:ribosomal small subunit assembly"/>
    <property type="evidence" value="ECO:0007669"/>
    <property type="project" value="TreeGrafter"/>
</dbReference>
<dbReference type="GO" id="GO:0006412">
    <property type="term" value="P:translation"/>
    <property type="evidence" value="ECO:0007669"/>
    <property type="project" value="UniProtKB-UniRule"/>
</dbReference>
<dbReference type="FunFam" id="3.30.860.10:FF:000001">
    <property type="entry name" value="30S ribosomal protein S19"/>
    <property type="match status" value="1"/>
</dbReference>
<dbReference type="Gene3D" id="3.30.860.10">
    <property type="entry name" value="30s Ribosomal Protein S19, Chain A"/>
    <property type="match status" value="1"/>
</dbReference>
<dbReference type="HAMAP" id="MF_00531">
    <property type="entry name" value="Ribosomal_uS19"/>
    <property type="match status" value="1"/>
</dbReference>
<dbReference type="InterPro" id="IPR002222">
    <property type="entry name" value="Ribosomal_uS19"/>
</dbReference>
<dbReference type="InterPro" id="IPR005732">
    <property type="entry name" value="Ribosomal_uS19_bac-type"/>
</dbReference>
<dbReference type="InterPro" id="IPR020934">
    <property type="entry name" value="Ribosomal_uS19_CS"/>
</dbReference>
<dbReference type="InterPro" id="IPR023575">
    <property type="entry name" value="Ribosomal_uS19_SF"/>
</dbReference>
<dbReference type="NCBIfam" id="TIGR01050">
    <property type="entry name" value="rpsS_bact"/>
    <property type="match status" value="1"/>
</dbReference>
<dbReference type="PANTHER" id="PTHR11880">
    <property type="entry name" value="RIBOSOMAL PROTEIN S19P FAMILY MEMBER"/>
    <property type="match status" value="1"/>
</dbReference>
<dbReference type="PANTHER" id="PTHR11880:SF8">
    <property type="entry name" value="SMALL RIBOSOMAL SUBUNIT PROTEIN US19M"/>
    <property type="match status" value="1"/>
</dbReference>
<dbReference type="Pfam" id="PF00203">
    <property type="entry name" value="Ribosomal_S19"/>
    <property type="match status" value="1"/>
</dbReference>
<dbReference type="PIRSF" id="PIRSF002144">
    <property type="entry name" value="Ribosomal_S19"/>
    <property type="match status" value="1"/>
</dbReference>
<dbReference type="PRINTS" id="PR00975">
    <property type="entry name" value="RIBOSOMALS19"/>
</dbReference>
<dbReference type="SUPFAM" id="SSF54570">
    <property type="entry name" value="Ribosomal protein S19"/>
    <property type="match status" value="1"/>
</dbReference>
<dbReference type="PROSITE" id="PS00323">
    <property type="entry name" value="RIBOSOMAL_S19"/>
    <property type="match status" value="1"/>
</dbReference>
<sequence length="93" mass="10472">MSRSIKKPPFCAPHVLRLVNKAIAQNKLNSIINIHSRSSVILNKFIGLTFGVYNGKTYVPVKVNDNMVGRKFGEFSPTRRYTGHVGDKKVSRK</sequence>
<keyword id="KW-1185">Reference proteome</keyword>
<keyword id="KW-0687">Ribonucleoprotein</keyword>
<keyword id="KW-0689">Ribosomal protein</keyword>
<keyword id="KW-0694">RNA-binding</keyword>
<keyword id="KW-0699">rRNA-binding</keyword>
<gene>
    <name evidence="1" type="primary">rpsS</name>
    <name type="ordered locus">ECH_0413</name>
</gene>
<feature type="chain" id="PRO_0000354289" description="Small ribosomal subunit protein uS19">
    <location>
        <begin position="1"/>
        <end position="93"/>
    </location>
</feature>
<protein>
    <recommendedName>
        <fullName evidence="1">Small ribosomal subunit protein uS19</fullName>
    </recommendedName>
    <alternativeName>
        <fullName evidence="2">30S ribosomal protein S19</fullName>
    </alternativeName>
</protein>
<accession>Q2GH52</accession>
<name>RS19_EHRCR</name>
<proteinExistence type="inferred from homology"/>
<organism>
    <name type="scientific">Ehrlichia chaffeensis (strain ATCC CRL-10679 / Arkansas)</name>
    <dbReference type="NCBI Taxonomy" id="205920"/>
    <lineage>
        <taxon>Bacteria</taxon>
        <taxon>Pseudomonadati</taxon>
        <taxon>Pseudomonadota</taxon>
        <taxon>Alphaproteobacteria</taxon>
        <taxon>Rickettsiales</taxon>
        <taxon>Anaplasmataceae</taxon>
        <taxon>Ehrlichia</taxon>
    </lineage>
</organism>